<name>IF1_LACP7</name>
<reference key="1">
    <citation type="submission" date="2007-11" db="EMBL/GenBank/DDBJ databases">
        <title>Complete genome sequence of Clostridium phytofermentans ISDg.</title>
        <authorList>
            <person name="Leschine S.B."/>
            <person name="Warnick T.A."/>
            <person name="Blanchard J.L."/>
            <person name="Schnell D.J."/>
            <person name="Petit E.L."/>
            <person name="LaTouf W.G."/>
            <person name="Copeland A."/>
            <person name="Lucas S."/>
            <person name="Lapidus A."/>
            <person name="Barry K."/>
            <person name="Glavina del Rio T."/>
            <person name="Dalin E."/>
            <person name="Tice H."/>
            <person name="Pitluck S."/>
            <person name="Kiss H."/>
            <person name="Brettin T."/>
            <person name="Bruce D."/>
            <person name="Detter J.C."/>
            <person name="Han C."/>
            <person name="Kuske C."/>
            <person name="Schmutz J."/>
            <person name="Larimer F."/>
            <person name="Land M."/>
            <person name="Hauser L."/>
            <person name="Kyrpides N."/>
            <person name="Kim E.A."/>
            <person name="Richardson P."/>
        </authorList>
    </citation>
    <scope>NUCLEOTIDE SEQUENCE [LARGE SCALE GENOMIC DNA]</scope>
    <source>
        <strain>ATCC 700394 / DSM 18823 / ISDg</strain>
    </source>
</reference>
<evidence type="ECO:0000255" key="1">
    <source>
        <dbReference type="HAMAP-Rule" id="MF_00075"/>
    </source>
</evidence>
<proteinExistence type="inferred from homology"/>
<dbReference type="EMBL" id="CP000885">
    <property type="protein sequence ID" value="ABX43991.1"/>
    <property type="molecule type" value="Genomic_DNA"/>
</dbReference>
<dbReference type="RefSeq" id="WP_012201639.1">
    <property type="nucleotide sequence ID" value="NC_010001.1"/>
</dbReference>
<dbReference type="SMR" id="A9KJH1"/>
<dbReference type="STRING" id="357809.Cphy_3644"/>
<dbReference type="KEGG" id="cpy:Cphy_3644"/>
<dbReference type="eggNOG" id="COG0361">
    <property type="taxonomic scope" value="Bacteria"/>
</dbReference>
<dbReference type="HOGENOM" id="CLU_151267_1_0_9"/>
<dbReference type="OrthoDB" id="9803250at2"/>
<dbReference type="Proteomes" id="UP000000370">
    <property type="component" value="Chromosome"/>
</dbReference>
<dbReference type="GO" id="GO:0005829">
    <property type="term" value="C:cytosol"/>
    <property type="evidence" value="ECO:0007669"/>
    <property type="project" value="TreeGrafter"/>
</dbReference>
<dbReference type="GO" id="GO:0043022">
    <property type="term" value="F:ribosome binding"/>
    <property type="evidence" value="ECO:0007669"/>
    <property type="project" value="UniProtKB-UniRule"/>
</dbReference>
<dbReference type="GO" id="GO:0019843">
    <property type="term" value="F:rRNA binding"/>
    <property type="evidence" value="ECO:0007669"/>
    <property type="project" value="UniProtKB-UniRule"/>
</dbReference>
<dbReference type="GO" id="GO:0003743">
    <property type="term" value="F:translation initiation factor activity"/>
    <property type="evidence" value="ECO:0007669"/>
    <property type="project" value="UniProtKB-UniRule"/>
</dbReference>
<dbReference type="CDD" id="cd04451">
    <property type="entry name" value="S1_IF1"/>
    <property type="match status" value="1"/>
</dbReference>
<dbReference type="FunFam" id="2.40.50.140:FF:000002">
    <property type="entry name" value="Translation initiation factor IF-1"/>
    <property type="match status" value="1"/>
</dbReference>
<dbReference type="Gene3D" id="2.40.50.140">
    <property type="entry name" value="Nucleic acid-binding proteins"/>
    <property type="match status" value="1"/>
</dbReference>
<dbReference type="HAMAP" id="MF_00075">
    <property type="entry name" value="IF_1"/>
    <property type="match status" value="1"/>
</dbReference>
<dbReference type="InterPro" id="IPR012340">
    <property type="entry name" value="NA-bd_OB-fold"/>
</dbReference>
<dbReference type="InterPro" id="IPR006196">
    <property type="entry name" value="RNA-binding_domain_S1_IF1"/>
</dbReference>
<dbReference type="InterPro" id="IPR003029">
    <property type="entry name" value="S1_domain"/>
</dbReference>
<dbReference type="InterPro" id="IPR004368">
    <property type="entry name" value="TIF_IF1"/>
</dbReference>
<dbReference type="NCBIfam" id="TIGR00008">
    <property type="entry name" value="infA"/>
    <property type="match status" value="1"/>
</dbReference>
<dbReference type="PANTHER" id="PTHR33370">
    <property type="entry name" value="TRANSLATION INITIATION FACTOR IF-1, CHLOROPLASTIC"/>
    <property type="match status" value="1"/>
</dbReference>
<dbReference type="PANTHER" id="PTHR33370:SF1">
    <property type="entry name" value="TRANSLATION INITIATION FACTOR IF-1, CHLOROPLASTIC"/>
    <property type="match status" value="1"/>
</dbReference>
<dbReference type="Pfam" id="PF01176">
    <property type="entry name" value="eIF-1a"/>
    <property type="match status" value="1"/>
</dbReference>
<dbReference type="SMART" id="SM00316">
    <property type="entry name" value="S1"/>
    <property type="match status" value="1"/>
</dbReference>
<dbReference type="SUPFAM" id="SSF50249">
    <property type="entry name" value="Nucleic acid-binding proteins"/>
    <property type="match status" value="1"/>
</dbReference>
<dbReference type="PROSITE" id="PS50832">
    <property type="entry name" value="S1_IF1_TYPE"/>
    <property type="match status" value="1"/>
</dbReference>
<comment type="function">
    <text evidence="1">One of the essential components for the initiation of protein synthesis. Stabilizes the binding of IF-2 and IF-3 on the 30S subunit to which N-formylmethionyl-tRNA(fMet) subsequently binds. Helps modulate mRNA selection, yielding the 30S pre-initiation complex (PIC). Upon addition of the 50S ribosomal subunit IF-1, IF-2 and IF-3 are released leaving the mature 70S translation initiation complex.</text>
</comment>
<comment type="subunit">
    <text evidence="1">Component of the 30S ribosomal translation pre-initiation complex which assembles on the 30S ribosome in the order IF-2 and IF-3, IF-1 and N-formylmethionyl-tRNA(fMet); mRNA recruitment can occur at any time during PIC assembly.</text>
</comment>
<comment type="subcellular location">
    <subcellularLocation>
        <location evidence="1">Cytoplasm</location>
    </subcellularLocation>
</comment>
<comment type="similarity">
    <text evidence="1">Belongs to the IF-1 family.</text>
</comment>
<gene>
    <name evidence="1" type="primary">infA</name>
    <name type="ordered locus">Cphy_3644</name>
</gene>
<organism>
    <name type="scientific">Lachnoclostridium phytofermentans (strain ATCC 700394 / DSM 18823 / ISDg)</name>
    <name type="common">Clostridium phytofermentans</name>
    <dbReference type="NCBI Taxonomy" id="357809"/>
    <lineage>
        <taxon>Bacteria</taxon>
        <taxon>Bacillati</taxon>
        <taxon>Bacillota</taxon>
        <taxon>Clostridia</taxon>
        <taxon>Lachnospirales</taxon>
        <taxon>Lachnospiraceae</taxon>
    </lineage>
</organism>
<keyword id="KW-0963">Cytoplasm</keyword>
<keyword id="KW-0396">Initiation factor</keyword>
<keyword id="KW-0648">Protein biosynthesis</keyword>
<keyword id="KW-1185">Reference proteome</keyword>
<keyword id="KW-0694">RNA-binding</keyword>
<keyword id="KW-0699">rRNA-binding</keyword>
<protein>
    <recommendedName>
        <fullName evidence="1">Translation initiation factor IF-1</fullName>
    </recommendedName>
</protein>
<accession>A9KJH1</accession>
<sequence length="72" mass="8179">MSKTDVVEIEGTVIEKLPNAMFSVELENGHRVLAHISGKLRMNFIKIVPGDKVTLELSPYDLTKGRIIWRDK</sequence>
<feature type="chain" id="PRO_0000338808" description="Translation initiation factor IF-1">
    <location>
        <begin position="1"/>
        <end position="72"/>
    </location>
</feature>
<feature type="domain" description="S1-like" evidence="1">
    <location>
        <begin position="1"/>
        <end position="72"/>
    </location>
</feature>